<organism>
    <name type="scientific">Methanococcoides burtonii (strain DSM 6242 / NBRC 107633 / OCM 468 / ACE-M)</name>
    <dbReference type="NCBI Taxonomy" id="259564"/>
    <lineage>
        <taxon>Archaea</taxon>
        <taxon>Methanobacteriati</taxon>
        <taxon>Methanobacteriota</taxon>
        <taxon>Stenosarchaea group</taxon>
        <taxon>Methanomicrobia</taxon>
        <taxon>Methanosarcinales</taxon>
        <taxon>Methanosarcinaceae</taxon>
        <taxon>Methanococcoides</taxon>
    </lineage>
</organism>
<protein>
    <recommendedName>
        <fullName evidence="1">Large ribosomal subunit protein eL21</fullName>
    </recommendedName>
    <alternativeName>
        <fullName evidence="2">50S ribosomal protein L21e</fullName>
    </alternativeName>
</protein>
<name>RL21_METBU</name>
<evidence type="ECO:0000255" key="1">
    <source>
        <dbReference type="HAMAP-Rule" id="MF_00369"/>
    </source>
</evidence>
<evidence type="ECO:0000305" key="2"/>
<dbReference type="EMBL" id="CP000300">
    <property type="protein sequence ID" value="ABE51852.1"/>
    <property type="molecule type" value="Genomic_DNA"/>
</dbReference>
<dbReference type="RefSeq" id="WP_011499005.1">
    <property type="nucleotide sequence ID" value="NC_007955.1"/>
</dbReference>
<dbReference type="SMR" id="Q12XH4"/>
<dbReference type="STRING" id="259564.Mbur_0905"/>
<dbReference type="GeneID" id="3998649"/>
<dbReference type="KEGG" id="mbu:Mbur_0905"/>
<dbReference type="HOGENOM" id="CLU_103610_1_1_2"/>
<dbReference type="OrthoDB" id="6295at2157"/>
<dbReference type="Proteomes" id="UP000001979">
    <property type="component" value="Chromosome"/>
</dbReference>
<dbReference type="GO" id="GO:1990904">
    <property type="term" value="C:ribonucleoprotein complex"/>
    <property type="evidence" value="ECO:0007669"/>
    <property type="project" value="UniProtKB-KW"/>
</dbReference>
<dbReference type="GO" id="GO:0005840">
    <property type="term" value="C:ribosome"/>
    <property type="evidence" value="ECO:0007669"/>
    <property type="project" value="UniProtKB-KW"/>
</dbReference>
<dbReference type="GO" id="GO:0003735">
    <property type="term" value="F:structural constituent of ribosome"/>
    <property type="evidence" value="ECO:0007669"/>
    <property type="project" value="InterPro"/>
</dbReference>
<dbReference type="GO" id="GO:0006412">
    <property type="term" value="P:translation"/>
    <property type="evidence" value="ECO:0007669"/>
    <property type="project" value="UniProtKB-UniRule"/>
</dbReference>
<dbReference type="FunFam" id="2.30.30.70:FF:000001">
    <property type="entry name" value="60S ribosomal protein L21"/>
    <property type="match status" value="1"/>
</dbReference>
<dbReference type="Gene3D" id="2.30.30.70">
    <property type="entry name" value="Ribosomal protein L21"/>
    <property type="match status" value="1"/>
</dbReference>
<dbReference type="HAMAP" id="MF_00369">
    <property type="entry name" value="Ribosomal_eL21"/>
    <property type="match status" value="1"/>
</dbReference>
<dbReference type="InterPro" id="IPR001147">
    <property type="entry name" value="Ribosomal_eL21"/>
</dbReference>
<dbReference type="InterPro" id="IPR022856">
    <property type="entry name" value="Ribosomal_eL21_arc"/>
</dbReference>
<dbReference type="InterPro" id="IPR018259">
    <property type="entry name" value="Ribosomal_eL21_CS"/>
</dbReference>
<dbReference type="InterPro" id="IPR036948">
    <property type="entry name" value="Ribosomal_eL21_sf"/>
</dbReference>
<dbReference type="InterPro" id="IPR008991">
    <property type="entry name" value="Translation_prot_SH3-like_sf"/>
</dbReference>
<dbReference type="NCBIfam" id="NF003303">
    <property type="entry name" value="PRK04306.1"/>
    <property type="match status" value="1"/>
</dbReference>
<dbReference type="PANTHER" id="PTHR20981">
    <property type="entry name" value="60S RIBOSOMAL PROTEIN L21"/>
    <property type="match status" value="1"/>
</dbReference>
<dbReference type="Pfam" id="PF01157">
    <property type="entry name" value="Ribosomal_L21e"/>
    <property type="match status" value="1"/>
</dbReference>
<dbReference type="SUPFAM" id="SSF50104">
    <property type="entry name" value="Translation proteins SH3-like domain"/>
    <property type="match status" value="1"/>
</dbReference>
<dbReference type="PROSITE" id="PS01171">
    <property type="entry name" value="RIBOSOMAL_L21E"/>
    <property type="match status" value="1"/>
</dbReference>
<accession>Q12XH4</accession>
<comment type="similarity">
    <text evidence="1">Belongs to the eukaryotic ribosomal protein eL21 family.</text>
</comment>
<reference key="1">
    <citation type="journal article" date="2009" name="ISME J.">
        <title>The genome sequence of the psychrophilic archaeon, Methanococcoides burtonii: the role of genome evolution in cold adaptation.</title>
        <authorList>
            <person name="Allen M.A."/>
            <person name="Lauro F.M."/>
            <person name="Williams T.J."/>
            <person name="Burg D."/>
            <person name="Siddiqui K.S."/>
            <person name="De Francisci D."/>
            <person name="Chong K.W."/>
            <person name="Pilak O."/>
            <person name="Chew H.H."/>
            <person name="De Maere M.Z."/>
            <person name="Ting L."/>
            <person name="Katrib M."/>
            <person name="Ng C."/>
            <person name="Sowers K.R."/>
            <person name="Galperin M.Y."/>
            <person name="Anderson I.J."/>
            <person name="Ivanova N."/>
            <person name="Dalin E."/>
            <person name="Martinez M."/>
            <person name="Lapidus A."/>
            <person name="Hauser L."/>
            <person name="Land M."/>
            <person name="Thomas T."/>
            <person name="Cavicchioli R."/>
        </authorList>
    </citation>
    <scope>NUCLEOTIDE SEQUENCE [LARGE SCALE GENOMIC DNA]</scope>
    <source>
        <strain>DSM 6242 / NBRC 107633 / OCM 468 / ACE-M</strain>
    </source>
</reference>
<feature type="chain" id="PRO_1000007119" description="Large ribosomal subunit protein eL21">
    <location>
        <begin position="1"/>
        <end position="97"/>
    </location>
</feature>
<proteinExistence type="inferred from homology"/>
<keyword id="KW-0687">Ribonucleoprotein</keyword>
<keyword id="KW-0689">Ribosomal protein</keyword>
<sequence>MPTSHGERSCTRYKLKKTVRERGLSPISKAIQDFEEGQMVHIDIDPSVQKGMPNAKFQGKTGKVLGKRGRAYLLQVTDGNSKKEVISLSQHLKPQKY</sequence>
<gene>
    <name evidence="1" type="primary">rpl21e</name>
    <name type="ordered locus">Mbur_0905</name>
</gene>